<accession>A8APT1</accession>
<evidence type="ECO:0000255" key="1">
    <source>
        <dbReference type="HAMAP-Rule" id="MF_01603"/>
    </source>
</evidence>
<dbReference type="EC" id="2.7.1.167" evidence="1"/>
<dbReference type="EC" id="2.7.7.70" evidence="1"/>
<dbReference type="EMBL" id="CP000822">
    <property type="protein sequence ID" value="ABV15494.1"/>
    <property type="molecule type" value="Genomic_DNA"/>
</dbReference>
<dbReference type="RefSeq" id="WP_012135177.1">
    <property type="nucleotide sequence ID" value="NC_009792.1"/>
</dbReference>
<dbReference type="SMR" id="A8APT1"/>
<dbReference type="STRING" id="290338.CKO_04438"/>
<dbReference type="GeneID" id="45138011"/>
<dbReference type="KEGG" id="cko:CKO_04438"/>
<dbReference type="HOGENOM" id="CLU_021150_2_1_6"/>
<dbReference type="OrthoDB" id="9802794at2"/>
<dbReference type="UniPathway" id="UPA00356">
    <property type="reaction ID" value="UER00437"/>
</dbReference>
<dbReference type="UniPathway" id="UPA00356">
    <property type="reaction ID" value="UER00439"/>
</dbReference>
<dbReference type="Proteomes" id="UP000008148">
    <property type="component" value="Chromosome"/>
</dbReference>
<dbReference type="GO" id="GO:0005829">
    <property type="term" value="C:cytosol"/>
    <property type="evidence" value="ECO:0007669"/>
    <property type="project" value="TreeGrafter"/>
</dbReference>
<dbReference type="GO" id="GO:0005524">
    <property type="term" value="F:ATP binding"/>
    <property type="evidence" value="ECO:0007669"/>
    <property type="project" value="UniProtKB-UniRule"/>
</dbReference>
<dbReference type="GO" id="GO:0033785">
    <property type="term" value="F:heptose 7-phosphate kinase activity"/>
    <property type="evidence" value="ECO:0007669"/>
    <property type="project" value="UniProtKB-UniRule"/>
</dbReference>
<dbReference type="GO" id="GO:0033786">
    <property type="term" value="F:heptose-1-phosphate adenylyltransferase activity"/>
    <property type="evidence" value="ECO:0007669"/>
    <property type="project" value="UniProtKB-UniRule"/>
</dbReference>
<dbReference type="GO" id="GO:0016773">
    <property type="term" value="F:phosphotransferase activity, alcohol group as acceptor"/>
    <property type="evidence" value="ECO:0007669"/>
    <property type="project" value="InterPro"/>
</dbReference>
<dbReference type="GO" id="GO:0097171">
    <property type="term" value="P:ADP-L-glycero-beta-D-manno-heptose biosynthetic process"/>
    <property type="evidence" value="ECO:0007669"/>
    <property type="project" value="UniProtKB-UniPathway"/>
</dbReference>
<dbReference type="CDD" id="cd01172">
    <property type="entry name" value="RfaE_like"/>
    <property type="match status" value="1"/>
</dbReference>
<dbReference type="FunFam" id="3.40.1190.20:FF:000002">
    <property type="entry name" value="Bifunctional protein HldE"/>
    <property type="match status" value="1"/>
</dbReference>
<dbReference type="FunFam" id="3.40.50.620:FF:000028">
    <property type="entry name" value="Bifunctional protein HldE"/>
    <property type="match status" value="1"/>
</dbReference>
<dbReference type="Gene3D" id="3.40.1190.20">
    <property type="match status" value="1"/>
</dbReference>
<dbReference type="Gene3D" id="3.40.50.620">
    <property type="entry name" value="HUPs"/>
    <property type="match status" value="1"/>
</dbReference>
<dbReference type="HAMAP" id="MF_01603">
    <property type="entry name" value="HldE"/>
    <property type="match status" value="1"/>
</dbReference>
<dbReference type="InterPro" id="IPR023030">
    <property type="entry name" value="Bifunc_HldE"/>
</dbReference>
<dbReference type="InterPro" id="IPR002173">
    <property type="entry name" value="Carboh/pur_kinase_PfkB_CS"/>
</dbReference>
<dbReference type="InterPro" id="IPR004821">
    <property type="entry name" value="Cyt_trans-like"/>
</dbReference>
<dbReference type="InterPro" id="IPR011611">
    <property type="entry name" value="PfkB_dom"/>
</dbReference>
<dbReference type="InterPro" id="IPR011913">
    <property type="entry name" value="RfaE_dom_I"/>
</dbReference>
<dbReference type="InterPro" id="IPR011914">
    <property type="entry name" value="RfaE_dom_II"/>
</dbReference>
<dbReference type="InterPro" id="IPR029056">
    <property type="entry name" value="Ribokinase-like"/>
</dbReference>
<dbReference type="InterPro" id="IPR014729">
    <property type="entry name" value="Rossmann-like_a/b/a_fold"/>
</dbReference>
<dbReference type="NCBIfam" id="TIGR00125">
    <property type="entry name" value="cyt_tran_rel"/>
    <property type="match status" value="1"/>
</dbReference>
<dbReference type="NCBIfam" id="NF008454">
    <property type="entry name" value="PRK11316.1"/>
    <property type="match status" value="1"/>
</dbReference>
<dbReference type="NCBIfam" id="TIGR02198">
    <property type="entry name" value="rfaE_dom_I"/>
    <property type="match status" value="1"/>
</dbReference>
<dbReference type="NCBIfam" id="TIGR02199">
    <property type="entry name" value="rfaE_dom_II"/>
    <property type="match status" value="1"/>
</dbReference>
<dbReference type="PANTHER" id="PTHR46969">
    <property type="entry name" value="BIFUNCTIONAL PROTEIN HLDE"/>
    <property type="match status" value="1"/>
</dbReference>
<dbReference type="PANTHER" id="PTHR46969:SF1">
    <property type="entry name" value="BIFUNCTIONAL PROTEIN HLDE"/>
    <property type="match status" value="1"/>
</dbReference>
<dbReference type="Pfam" id="PF01467">
    <property type="entry name" value="CTP_transf_like"/>
    <property type="match status" value="1"/>
</dbReference>
<dbReference type="Pfam" id="PF00294">
    <property type="entry name" value="PfkB"/>
    <property type="match status" value="1"/>
</dbReference>
<dbReference type="SUPFAM" id="SSF52374">
    <property type="entry name" value="Nucleotidylyl transferase"/>
    <property type="match status" value="1"/>
</dbReference>
<dbReference type="SUPFAM" id="SSF53613">
    <property type="entry name" value="Ribokinase-like"/>
    <property type="match status" value="1"/>
</dbReference>
<dbReference type="PROSITE" id="PS00583">
    <property type="entry name" value="PFKB_KINASES_1"/>
    <property type="match status" value="1"/>
</dbReference>
<organism>
    <name type="scientific">Citrobacter koseri (strain ATCC BAA-895 / CDC 4225-83 / SGSC4696)</name>
    <dbReference type="NCBI Taxonomy" id="290338"/>
    <lineage>
        <taxon>Bacteria</taxon>
        <taxon>Pseudomonadati</taxon>
        <taxon>Pseudomonadota</taxon>
        <taxon>Gammaproteobacteria</taxon>
        <taxon>Enterobacterales</taxon>
        <taxon>Enterobacteriaceae</taxon>
        <taxon>Citrobacter</taxon>
    </lineage>
</organism>
<protein>
    <recommendedName>
        <fullName evidence="1">Bifunctional protein HldE</fullName>
    </recommendedName>
    <domain>
        <recommendedName>
            <fullName evidence="1">D-beta-D-heptose 7-phosphate kinase</fullName>
            <ecNumber evidence="1">2.7.1.167</ecNumber>
        </recommendedName>
        <alternativeName>
            <fullName evidence="1">D-beta-D-heptose 7-phosphotransferase</fullName>
        </alternativeName>
        <alternativeName>
            <fullName evidence="1">D-glycero-beta-D-manno-heptose-7-phosphate kinase</fullName>
        </alternativeName>
    </domain>
    <domain>
        <recommendedName>
            <fullName evidence="1">D-beta-D-heptose 1-phosphate adenylyltransferase</fullName>
            <ecNumber evidence="1">2.7.7.70</ecNumber>
        </recommendedName>
        <alternativeName>
            <fullName evidence="1">D-glycero-beta-D-manno-heptose 1-phosphate adenylyltransferase</fullName>
        </alternativeName>
    </domain>
</protein>
<keyword id="KW-0067">ATP-binding</keyword>
<keyword id="KW-0119">Carbohydrate metabolism</keyword>
<keyword id="KW-0418">Kinase</keyword>
<keyword id="KW-0511">Multifunctional enzyme</keyword>
<keyword id="KW-0547">Nucleotide-binding</keyword>
<keyword id="KW-0548">Nucleotidyltransferase</keyword>
<keyword id="KW-1185">Reference proteome</keyword>
<keyword id="KW-0808">Transferase</keyword>
<proteinExistence type="inferred from homology"/>
<reference key="1">
    <citation type="submission" date="2007-08" db="EMBL/GenBank/DDBJ databases">
        <authorList>
            <consortium name="The Citrobacter koseri Genome Sequencing Project"/>
            <person name="McClelland M."/>
            <person name="Sanderson E.K."/>
            <person name="Porwollik S."/>
            <person name="Spieth J."/>
            <person name="Clifton W.S."/>
            <person name="Latreille P."/>
            <person name="Courtney L."/>
            <person name="Wang C."/>
            <person name="Pepin K."/>
            <person name="Bhonagiri V."/>
            <person name="Nash W."/>
            <person name="Johnson M."/>
            <person name="Thiruvilangam P."/>
            <person name="Wilson R."/>
        </authorList>
    </citation>
    <scope>NUCLEOTIDE SEQUENCE [LARGE SCALE GENOMIC DNA]</scope>
    <source>
        <strain>ATCC BAA-895 / CDC 4225-83 / SGSC4696</strain>
    </source>
</reference>
<comment type="function">
    <text evidence="1">Catalyzes the phosphorylation of D-glycero-D-manno-heptose 7-phosphate at the C-1 position to selectively form D-glycero-beta-D-manno-heptose-1,7-bisphosphate.</text>
</comment>
<comment type="function">
    <text evidence="1">Catalyzes the ADP transfer from ATP to D-glycero-beta-D-manno-heptose 1-phosphate, yielding ADP-D-glycero-beta-D-manno-heptose.</text>
</comment>
<comment type="catalytic activity">
    <reaction evidence="1">
        <text>D-glycero-beta-D-manno-heptose 7-phosphate + ATP = D-glycero-beta-D-manno-heptose 1,7-bisphosphate + ADP + H(+)</text>
        <dbReference type="Rhea" id="RHEA:27473"/>
        <dbReference type="ChEBI" id="CHEBI:15378"/>
        <dbReference type="ChEBI" id="CHEBI:30616"/>
        <dbReference type="ChEBI" id="CHEBI:60204"/>
        <dbReference type="ChEBI" id="CHEBI:60208"/>
        <dbReference type="ChEBI" id="CHEBI:456216"/>
        <dbReference type="EC" id="2.7.1.167"/>
    </reaction>
</comment>
<comment type="catalytic activity">
    <reaction evidence="1">
        <text>D-glycero-beta-D-manno-heptose 1-phosphate + ATP + H(+) = ADP-D-glycero-beta-D-manno-heptose + diphosphate</text>
        <dbReference type="Rhea" id="RHEA:27465"/>
        <dbReference type="ChEBI" id="CHEBI:15378"/>
        <dbReference type="ChEBI" id="CHEBI:30616"/>
        <dbReference type="ChEBI" id="CHEBI:33019"/>
        <dbReference type="ChEBI" id="CHEBI:59967"/>
        <dbReference type="ChEBI" id="CHEBI:61593"/>
        <dbReference type="EC" id="2.7.7.70"/>
    </reaction>
</comment>
<comment type="pathway">
    <text evidence="1">Nucleotide-sugar biosynthesis; ADP-L-glycero-beta-D-manno-heptose biosynthesis; ADP-L-glycero-beta-D-manno-heptose from D-glycero-beta-D-manno-heptose 7-phosphate: step 1/4.</text>
</comment>
<comment type="pathway">
    <text evidence="1">Nucleotide-sugar biosynthesis; ADP-L-glycero-beta-D-manno-heptose biosynthesis; ADP-L-glycero-beta-D-manno-heptose from D-glycero-beta-D-manno-heptose 7-phosphate: step 3/4.</text>
</comment>
<comment type="subunit">
    <text evidence="1">Homodimer.</text>
</comment>
<comment type="similarity">
    <text evidence="1">In the N-terminal section; belongs to the carbohydrate kinase PfkB family.</text>
</comment>
<comment type="similarity">
    <text evidence="1">In the C-terminal section; belongs to the cytidylyltransferase family.</text>
</comment>
<sequence>MKVTLPEFERAGVMVVGDVMLDRYWYGPTSRISPEAPVPVVKVDTIEERPGGAANVAMNIASLGANSRLVGLTGIDDAARALSKTLADVNVKCDFVSVPTHPTITKLRVLSRNQQLIRLDFEEGFEGVDPLPLHERINQALGSIGALVLSDYAKGALASVQQMIQLARKAGVPVLIDPKGTDFERYRGATLLTPNLSEFEAVAGKCKSEEEIVERGMKLIADFEFSALLVTRSEQGMTLLQPGKAPLHMPTQAQEVYDVTGAGDTVIGVLAATLAAGNSLEEACYFANAAAGVVVGKLGTSTVSPIELENAVRGRADTGFGVMTEAELKQAVASARKRGEKVVMTNGVFDILHAGHVSYLANARKLGDRLIVAVNSDASTKRLKGETRPVNPLEQRMIVLGALESVDWVVSFDEDTPQRLIAGVLPDLLVKGGDYKPEEIAGSEEVWANGGEVLVLNFEDGCSTTNIIKKIQKDSDK</sequence>
<gene>
    <name evidence="1" type="primary">hldE</name>
    <name type="ordered locus">CKO_04438</name>
</gene>
<name>HLDE_CITK8</name>
<feature type="chain" id="PRO_0000323484" description="Bifunctional protein HldE">
    <location>
        <begin position="1"/>
        <end position="477"/>
    </location>
</feature>
<feature type="region of interest" description="Ribokinase">
    <location>
        <begin position="1"/>
        <end position="318"/>
    </location>
</feature>
<feature type="region of interest" description="Cytidylyltransferase">
    <location>
        <begin position="344"/>
        <end position="477"/>
    </location>
</feature>
<feature type="active site" evidence="1">
    <location>
        <position position="264"/>
    </location>
</feature>
<feature type="binding site" evidence="1">
    <location>
        <begin position="195"/>
        <end position="198"/>
    </location>
    <ligand>
        <name>ATP</name>
        <dbReference type="ChEBI" id="CHEBI:30616"/>
    </ligand>
</feature>